<name>LEG1_SHEEP</name>
<keyword id="KW-0007">Acetylation</keyword>
<keyword id="KW-0053">Apoptosis</keyword>
<keyword id="KW-0963">Cytoplasm</keyword>
<keyword id="KW-0903">Direct protein sequencing</keyword>
<keyword id="KW-0272">Extracellular matrix</keyword>
<keyword id="KW-0430">Lectin</keyword>
<keyword id="KW-0597">Phosphoprotein</keyword>
<keyword id="KW-1185">Reference proteome</keyword>
<keyword id="KW-0964">Secreted</keyword>
<protein>
    <recommendedName>
        <fullName>Galectin-1</fullName>
        <shortName>Gal-1</shortName>
    </recommendedName>
    <alternativeName>
        <fullName>14 kDa lectin</fullName>
    </alternativeName>
    <alternativeName>
        <fullName>Beta-galactoside-binding lectin L-14-I</fullName>
    </alternativeName>
    <alternativeName>
        <fullName>Galaptin</fullName>
    </alternativeName>
    <alternativeName>
        <fullName>Lactose-binding lectin 1</fullName>
    </alternativeName>
    <alternativeName>
        <fullName>Lectin galactoside-binding soluble 1</fullName>
    </alternativeName>
    <alternativeName>
        <fullName>OPG-1</fullName>
    </alternativeName>
    <alternativeName>
        <fullName>S-Lac lectin 1</fullName>
    </alternativeName>
</protein>
<feature type="initiator methionine" description="Removed" evidence="2 5">
    <location>
        <position position="1"/>
    </location>
</feature>
<feature type="chain" id="PRO_0000076921" description="Galectin-1">
    <location>
        <begin position="2"/>
        <end position="135"/>
    </location>
</feature>
<feature type="domain" description="Galectin" evidence="4">
    <location>
        <begin position="4"/>
        <end position="135"/>
    </location>
</feature>
<feature type="binding site" evidence="1">
    <location>
        <begin position="45"/>
        <end position="49"/>
    </location>
    <ligand>
        <name>a beta-D-galactoside</name>
        <dbReference type="ChEBI" id="CHEBI:28034"/>
    </ligand>
</feature>
<feature type="binding site" evidence="1">
    <location>
        <position position="53"/>
    </location>
    <ligand>
        <name>a beta-D-galactoside</name>
        <dbReference type="ChEBI" id="CHEBI:28034"/>
    </ligand>
</feature>
<feature type="binding site" evidence="1">
    <location>
        <position position="62"/>
    </location>
    <ligand>
        <name>a beta-D-galactoside</name>
        <dbReference type="ChEBI" id="CHEBI:28034"/>
    </ligand>
</feature>
<feature type="binding site" evidence="1">
    <location>
        <begin position="69"/>
        <end position="72"/>
    </location>
    <ligand>
        <name>a beta-D-galactoside</name>
        <dbReference type="ChEBI" id="CHEBI:28034"/>
    </ligand>
</feature>
<feature type="modified residue" description="N-acetylalanine" evidence="2">
    <location>
        <position position="2"/>
    </location>
</feature>
<feature type="modified residue" description="N6-acetyllysine" evidence="3">
    <location>
        <position position="13"/>
    </location>
</feature>
<feature type="modified residue" description="N6-acetyllysine" evidence="2">
    <location>
        <position position="29"/>
    </location>
</feature>
<feature type="modified residue" description="Phosphoserine" evidence="2">
    <location>
        <position position="30"/>
    </location>
</feature>
<feature type="modified residue" description="N6-acetyllysine; alternate" evidence="3">
    <location>
        <position position="108"/>
    </location>
</feature>
<feature type="modified residue" description="N6-succinyllysine; alternate" evidence="3">
    <location>
        <position position="108"/>
    </location>
</feature>
<feature type="modified residue" description="N6-acetyllysine" evidence="3">
    <location>
        <position position="128"/>
    </location>
</feature>
<dbReference type="SMR" id="P81184"/>
<dbReference type="STRING" id="9940.ENSOARP00000014976"/>
<dbReference type="PaxDb" id="9940-ENSOARP00000014976"/>
<dbReference type="eggNOG" id="KOG3587">
    <property type="taxonomic scope" value="Eukaryota"/>
</dbReference>
<dbReference type="Proteomes" id="UP000002356">
    <property type="component" value="Unplaced"/>
</dbReference>
<dbReference type="GO" id="GO:0005737">
    <property type="term" value="C:cytoplasm"/>
    <property type="evidence" value="ECO:0007669"/>
    <property type="project" value="UniProtKB-SubCell"/>
</dbReference>
<dbReference type="GO" id="GO:0005615">
    <property type="term" value="C:extracellular space"/>
    <property type="evidence" value="ECO:0007669"/>
    <property type="project" value="TreeGrafter"/>
</dbReference>
<dbReference type="GO" id="GO:0030395">
    <property type="term" value="F:lactose binding"/>
    <property type="evidence" value="ECO:0007669"/>
    <property type="project" value="TreeGrafter"/>
</dbReference>
<dbReference type="GO" id="GO:0043236">
    <property type="term" value="F:laminin binding"/>
    <property type="evidence" value="ECO:0007669"/>
    <property type="project" value="TreeGrafter"/>
</dbReference>
<dbReference type="GO" id="GO:0006915">
    <property type="term" value="P:apoptotic process"/>
    <property type="evidence" value="ECO:0007669"/>
    <property type="project" value="UniProtKB-KW"/>
</dbReference>
<dbReference type="CDD" id="cd00070">
    <property type="entry name" value="GLECT"/>
    <property type="match status" value="1"/>
</dbReference>
<dbReference type="FunFam" id="2.60.120.200:FF:000021">
    <property type="entry name" value="Galectin"/>
    <property type="match status" value="1"/>
</dbReference>
<dbReference type="Gene3D" id="2.60.120.200">
    <property type="match status" value="1"/>
</dbReference>
<dbReference type="InterPro" id="IPR013320">
    <property type="entry name" value="ConA-like_dom_sf"/>
</dbReference>
<dbReference type="InterPro" id="IPR044156">
    <property type="entry name" value="Galectin-like"/>
</dbReference>
<dbReference type="InterPro" id="IPR001079">
    <property type="entry name" value="Galectin_CRD"/>
</dbReference>
<dbReference type="PANTHER" id="PTHR11346">
    <property type="entry name" value="GALECTIN"/>
    <property type="match status" value="1"/>
</dbReference>
<dbReference type="PANTHER" id="PTHR11346:SF97">
    <property type="entry name" value="GALECTIN-1"/>
    <property type="match status" value="1"/>
</dbReference>
<dbReference type="Pfam" id="PF00337">
    <property type="entry name" value="Gal-bind_lectin"/>
    <property type="match status" value="1"/>
</dbReference>
<dbReference type="SMART" id="SM00908">
    <property type="entry name" value="Gal-bind_lectin"/>
    <property type="match status" value="1"/>
</dbReference>
<dbReference type="SMART" id="SM00276">
    <property type="entry name" value="GLECT"/>
    <property type="match status" value="1"/>
</dbReference>
<dbReference type="SUPFAM" id="SSF49899">
    <property type="entry name" value="Concanavalin A-like lectins/glucanases"/>
    <property type="match status" value="1"/>
</dbReference>
<dbReference type="PROSITE" id="PS51304">
    <property type="entry name" value="GALECTIN"/>
    <property type="match status" value="1"/>
</dbReference>
<sequence>MACGLVASNLNLKPGECLRVRGEVAADAKSFSLNLGKDDNNLCLHFNPRFNAHGDINTIVCNSKDGGAWGAEQRETAFPFQPGSVAEVCISFNQTDLTIKLPDGYEFKFPNRLNLEAINYLSAGGDFKIKCVAFE</sequence>
<evidence type="ECO:0000250" key="1"/>
<evidence type="ECO:0000250" key="2">
    <source>
        <dbReference type="UniProtKB" id="P09382"/>
    </source>
</evidence>
<evidence type="ECO:0000250" key="3">
    <source>
        <dbReference type="UniProtKB" id="P16045"/>
    </source>
</evidence>
<evidence type="ECO:0000255" key="4">
    <source>
        <dbReference type="PROSITE-ProRule" id="PRU00639"/>
    </source>
</evidence>
<evidence type="ECO:0000269" key="5">
    <source>
    </source>
</evidence>
<proteinExistence type="evidence at protein level"/>
<organism>
    <name type="scientific">Ovis aries</name>
    <name type="common">Sheep</name>
    <dbReference type="NCBI Taxonomy" id="9940"/>
    <lineage>
        <taxon>Eukaryota</taxon>
        <taxon>Metazoa</taxon>
        <taxon>Chordata</taxon>
        <taxon>Craniata</taxon>
        <taxon>Vertebrata</taxon>
        <taxon>Euteleostomi</taxon>
        <taxon>Mammalia</taxon>
        <taxon>Eutheria</taxon>
        <taxon>Laurasiatheria</taxon>
        <taxon>Artiodactyla</taxon>
        <taxon>Ruminantia</taxon>
        <taxon>Pecora</taxon>
        <taxon>Bovidae</taxon>
        <taxon>Caprinae</taxon>
        <taxon>Ovis</taxon>
    </lineage>
</organism>
<accession>P81184</accession>
<gene>
    <name type="primary">LGALS1</name>
</gene>
<reference key="1">
    <citation type="journal article" date="1998" name="Eur. J. Biochem.">
        <title>Galectin-1 from ovine placenta -- amino-acid sequence, physicochemical properties and implications in T-cell death.</title>
        <authorList>
            <person name="Iglesias M.M."/>
            <person name="Rabinovich G.A."/>
            <person name="Ivanovic V."/>
            <person name="Sotomayor C."/>
            <person name="Wolfenstein-Todel C."/>
        </authorList>
    </citation>
    <scope>PROTEIN SEQUENCE OF 2-135</scope>
    <scope>FUNCTION</scope>
    <source>
        <tissue>Placenta</tissue>
    </source>
</reference>
<comment type="function">
    <text evidence="2 5">Lectin that binds beta-galactoside and a wide array of complex carbohydrates. Plays a role in regulating apoptosis, cell proliferation and cell differentiation (PubMed:9546655). Inhibits CD45 protein phosphatase activity and therefore the dephosphorylation of Lyn kinase (By similarity). Strong inducer of T-cell apoptosis (PubMed:9546655).</text>
</comment>
<comment type="subunit">
    <text evidence="2">Homodimer. Binds LGALS3BP. Interacts with CD2, CD3, CD4, CD6, CD7, CD43, ALCAM and CD45. Interacts with laminin (via poly-N-acetyllactosamine). Interacts with SUSD2. Interacts with cargo receptor TMED10; the interaction mediates the translocation from the cytoplasm into the ERGIC (endoplasmic reticulum-Golgi intermediate compartment) and thereby secretion.</text>
</comment>
<comment type="subcellular location">
    <subcellularLocation>
        <location evidence="2">Secreted</location>
        <location evidence="2">Extracellular space</location>
        <location evidence="2">Extracellular matrix</location>
    </subcellularLocation>
    <subcellularLocation>
        <location evidence="2">Cytoplasm</location>
    </subcellularLocation>
    <subcellularLocation>
        <location evidence="2">Secreted</location>
    </subcellularLocation>
    <text evidence="2">Can be secreted; the secretion is dependent on protein unfolding and facilitated by the cargo receptor TMED10; it results in protein translocation from the cytoplasm into the ERGIC (endoplasmic reticulum-Golgi intermediate compartment) followed by vesicle entry and secretion.</text>
</comment>